<dbReference type="EC" id="3.6.5.n1" evidence="1"/>
<dbReference type="EMBL" id="CP000383">
    <property type="protein sequence ID" value="ABG58984.1"/>
    <property type="molecule type" value="Genomic_DNA"/>
</dbReference>
<dbReference type="RefSeq" id="WP_011585101.1">
    <property type="nucleotide sequence ID" value="NC_008255.1"/>
</dbReference>
<dbReference type="SMR" id="Q11UD0"/>
<dbReference type="STRING" id="269798.CHU_1717"/>
<dbReference type="KEGG" id="chu:CHU_1717"/>
<dbReference type="eggNOG" id="COG0481">
    <property type="taxonomic scope" value="Bacteria"/>
</dbReference>
<dbReference type="HOGENOM" id="CLU_009995_3_3_10"/>
<dbReference type="OrthoDB" id="9801591at2"/>
<dbReference type="Proteomes" id="UP000001822">
    <property type="component" value="Chromosome"/>
</dbReference>
<dbReference type="GO" id="GO:0005886">
    <property type="term" value="C:plasma membrane"/>
    <property type="evidence" value="ECO:0007669"/>
    <property type="project" value="UniProtKB-SubCell"/>
</dbReference>
<dbReference type="GO" id="GO:0005525">
    <property type="term" value="F:GTP binding"/>
    <property type="evidence" value="ECO:0007669"/>
    <property type="project" value="UniProtKB-UniRule"/>
</dbReference>
<dbReference type="GO" id="GO:0003924">
    <property type="term" value="F:GTPase activity"/>
    <property type="evidence" value="ECO:0007669"/>
    <property type="project" value="UniProtKB-UniRule"/>
</dbReference>
<dbReference type="GO" id="GO:0043022">
    <property type="term" value="F:ribosome binding"/>
    <property type="evidence" value="ECO:0007669"/>
    <property type="project" value="UniProtKB-UniRule"/>
</dbReference>
<dbReference type="GO" id="GO:0003746">
    <property type="term" value="F:translation elongation factor activity"/>
    <property type="evidence" value="ECO:0007669"/>
    <property type="project" value="UniProtKB-UniRule"/>
</dbReference>
<dbReference type="GO" id="GO:0045727">
    <property type="term" value="P:positive regulation of translation"/>
    <property type="evidence" value="ECO:0007669"/>
    <property type="project" value="UniProtKB-UniRule"/>
</dbReference>
<dbReference type="CDD" id="cd03699">
    <property type="entry name" value="EF4_II"/>
    <property type="match status" value="1"/>
</dbReference>
<dbReference type="CDD" id="cd16260">
    <property type="entry name" value="EF4_III"/>
    <property type="match status" value="1"/>
</dbReference>
<dbReference type="CDD" id="cd01890">
    <property type="entry name" value="LepA"/>
    <property type="match status" value="1"/>
</dbReference>
<dbReference type="CDD" id="cd03709">
    <property type="entry name" value="lepA_C"/>
    <property type="match status" value="1"/>
</dbReference>
<dbReference type="FunFam" id="3.40.50.300:FF:000078">
    <property type="entry name" value="Elongation factor 4"/>
    <property type="match status" value="1"/>
</dbReference>
<dbReference type="FunFam" id="2.40.30.10:FF:000015">
    <property type="entry name" value="Translation factor GUF1, mitochondrial"/>
    <property type="match status" value="1"/>
</dbReference>
<dbReference type="FunFam" id="3.30.70.240:FF:000007">
    <property type="entry name" value="Translation factor GUF1, mitochondrial"/>
    <property type="match status" value="1"/>
</dbReference>
<dbReference type="FunFam" id="3.30.70.2570:FF:000001">
    <property type="entry name" value="Translation factor GUF1, mitochondrial"/>
    <property type="match status" value="1"/>
</dbReference>
<dbReference type="FunFam" id="3.30.70.870:FF:000004">
    <property type="entry name" value="Translation factor GUF1, mitochondrial"/>
    <property type="match status" value="1"/>
</dbReference>
<dbReference type="Gene3D" id="3.30.70.240">
    <property type="match status" value="1"/>
</dbReference>
<dbReference type="Gene3D" id="3.30.70.2570">
    <property type="entry name" value="Elongation factor 4, C-terminal domain"/>
    <property type="match status" value="1"/>
</dbReference>
<dbReference type="Gene3D" id="3.30.70.870">
    <property type="entry name" value="Elongation Factor G (Translational Gtpase), domain 3"/>
    <property type="match status" value="1"/>
</dbReference>
<dbReference type="Gene3D" id="3.40.50.300">
    <property type="entry name" value="P-loop containing nucleotide triphosphate hydrolases"/>
    <property type="match status" value="1"/>
</dbReference>
<dbReference type="Gene3D" id="2.40.30.10">
    <property type="entry name" value="Translation factors"/>
    <property type="match status" value="1"/>
</dbReference>
<dbReference type="HAMAP" id="MF_00071">
    <property type="entry name" value="LepA"/>
    <property type="match status" value="1"/>
</dbReference>
<dbReference type="InterPro" id="IPR006297">
    <property type="entry name" value="EF-4"/>
</dbReference>
<dbReference type="InterPro" id="IPR035647">
    <property type="entry name" value="EFG_III/V"/>
</dbReference>
<dbReference type="InterPro" id="IPR000640">
    <property type="entry name" value="EFG_V-like"/>
</dbReference>
<dbReference type="InterPro" id="IPR004161">
    <property type="entry name" value="EFTu-like_2"/>
</dbReference>
<dbReference type="InterPro" id="IPR038363">
    <property type="entry name" value="LepA_C_sf"/>
</dbReference>
<dbReference type="InterPro" id="IPR013842">
    <property type="entry name" value="LepA_CTD"/>
</dbReference>
<dbReference type="InterPro" id="IPR035654">
    <property type="entry name" value="LepA_IV"/>
</dbReference>
<dbReference type="InterPro" id="IPR027417">
    <property type="entry name" value="P-loop_NTPase"/>
</dbReference>
<dbReference type="InterPro" id="IPR005225">
    <property type="entry name" value="Small_GTP-bd"/>
</dbReference>
<dbReference type="InterPro" id="IPR000795">
    <property type="entry name" value="T_Tr_GTP-bd_dom"/>
</dbReference>
<dbReference type="InterPro" id="IPR009000">
    <property type="entry name" value="Transl_B-barrel_sf"/>
</dbReference>
<dbReference type="NCBIfam" id="TIGR01393">
    <property type="entry name" value="lepA"/>
    <property type="match status" value="1"/>
</dbReference>
<dbReference type="NCBIfam" id="TIGR00231">
    <property type="entry name" value="small_GTP"/>
    <property type="match status" value="1"/>
</dbReference>
<dbReference type="PANTHER" id="PTHR43512:SF4">
    <property type="entry name" value="TRANSLATION FACTOR GUF1 HOMOLOG, CHLOROPLASTIC"/>
    <property type="match status" value="1"/>
</dbReference>
<dbReference type="PANTHER" id="PTHR43512">
    <property type="entry name" value="TRANSLATION FACTOR GUF1-RELATED"/>
    <property type="match status" value="1"/>
</dbReference>
<dbReference type="Pfam" id="PF00679">
    <property type="entry name" value="EFG_C"/>
    <property type="match status" value="1"/>
</dbReference>
<dbReference type="Pfam" id="PF00009">
    <property type="entry name" value="GTP_EFTU"/>
    <property type="match status" value="1"/>
</dbReference>
<dbReference type="Pfam" id="PF03144">
    <property type="entry name" value="GTP_EFTU_D2"/>
    <property type="match status" value="1"/>
</dbReference>
<dbReference type="Pfam" id="PF06421">
    <property type="entry name" value="LepA_C"/>
    <property type="match status" value="1"/>
</dbReference>
<dbReference type="PRINTS" id="PR00315">
    <property type="entry name" value="ELONGATNFCT"/>
</dbReference>
<dbReference type="SUPFAM" id="SSF54980">
    <property type="entry name" value="EF-G C-terminal domain-like"/>
    <property type="match status" value="2"/>
</dbReference>
<dbReference type="SUPFAM" id="SSF52540">
    <property type="entry name" value="P-loop containing nucleoside triphosphate hydrolases"/>
    <property type="match status" value="1"/>
</dbReference>
<dbReference type="SUPFAM" id="SSF50447">
    <property type="entry name" value="Translation proteins"/>
    <property type="match status" value="1"/>
</dbReference>
<dbReference type="PROSITE" id="PS51722">
    <property type="entry name" value="G_TR_2"/>
    <property type="match status" value="1"/>
</dbReference>
<accession>Q11UD0</accession>
<protein>
    <recommendedName>
        <fullName evidence="1">Elongation factor 4</fullName>
        <shortName evidence="1">EF-4</shortName>
        <ecNumber evidence="1">3.6.5.n1</ecNumber>
    </recommendedName>
    <alternativeName>
        <fullName evidence="1">Ribosomal back-translocase LepA</fullName>
    </alternativeName>
</protein>
<name>LEPA_CYTH3</name>
<keyword id="KW-0997">Cell inner membrane</keyword>
<keyword id="KW-1003">Cell membrane</keyword>
<keyword id="KW-0342">GTP-binding</keyword>
<keyword id="KW-0378">Hydrolase</keyword>
<keyword id="KW-0472">Membrane</keyword>
<keyword id="KW-0547">Nucleotide-binding</keyword>
<keyword id="KW-0648">Protein biosynthesis</keyword>
<keyword id="KW-1185">Reference proteome</keyword>
<feature type="chain" id="PRO_0000265651" description="Elongation factor 4">
    <location>
        <begin position="1"/>
        <end position="596"/>
    </location>
</feature>
<feature type="domain" description="tr-type G">
    <location>
        <begin position="2"/>
        <end position="183"/>
    </location>
</feature>
<feature type="binding site" evidence="1">
    <location>
        <begin position="14"/>
        <end position="19"/>
    </location>
    <ligand>
        <name>GTP</name>
        <dbReference type="ChEBI" id="CHEBI:37565"/>
    </ligand>
</feature>
<feature type="binding site" evidence="1">
    <location>
        <begin position="130"/>
        <end position="133"/>
    </location>
    <ligand>
        <name>GTP</name>
        <dbReference type="ChEBI" id="CHEBI:37565"/>
    </ligand>
</feature>
<reference key="1">
    <citation type="journal article" date="2007" name="Appl. Environ. Microbiol.">
        <title>Genome sequence of the cellulolytic gliding bacterium Cytophaga hutchinsonii.</title>
        <authorList>
            <person name="Xie G."/>
            <person name="Bruce D.C."/>
            <person name="Challacombe J.F."/>
            <person name="Chertkov O."/>
            <person name="Detter J.C."/>
            <person name="Gilna P."/>
            <person name="Han C.S."/>
            <person name="Lucas S."/>
            <person name="Misra M."/>
            <person name="Myers G.L."/>
            <person name="Richardson P."/>
            <person name="Tapia R."/>
            <person name="Thayer N."/>
            <person name="Thompson L.S."/>
            <person name="Brettin T.S."/>
            <person name="Henrissat B."/>
            <person name="Wilson D.B."/>
            <person name="McBride M.J."/>
        </authorList>
    </citation>
    <scope>NUCLEOTIDE SEQUENCE [LARGE SCALE GENOMIC DNA]</scope>
    <source>
        <strain>ATCC 33406 / DSM 1761 / JCM 20678 / CIP 103989 / IAM 12607 / NBRC 15051 / NCIMB 9469 / D465</strain>
    </source>
</reference>
<proteinExistence type="inferred from homology"/>
<evidence type="ECO:0000255" key="1">
    <source>
        <dbReference type="HAMAP-Rule" id="MF_00071"/>
    </source>
</evidence>
<comment type="function">
    <text evidence="1">Required for accurate and efficient protein synthesis under certain stress conditions. May act as a fidelity factor of the translation reaction, by catalyzing a one-codon backward translocation of tRNAs on improperly translocated ribosomes. Back-translocation proceeds from a post-translocation (POST) complex to a pre-translocation (PRE) complex, thus giving elongation factor G a second chance to translocate the tRNAs correctly. Binds to ribosomes in a GTP-dependent manner.</text>
</comment>
<comment type="catalytic activity">
    <reaction evidence="1">
        <text>GTP + H2O = GDP + phosphate + H(+)</text>
        <dbReference type="Rhea" id="RHEA:19669"/>
        <dbReference type="ChEBI" id="CHEBI:15377"/>
        <dbReference type="ChEBI" id="CHEBI:15378"/>
        <dbReference type="ChEBI" id="CHEBI:37565"/>
        <dbReference type="ChEBI" id="CHEBI:43474"/>
        <dbReference type="ChEBI" id="CHEBI:58189"/>
        <dbReference type="EC" id="3.6.5.n1"/>
    </reaction>
</comment>
<comment type="subcellular location">
    <subcellularLocation>
        <location evidence="1">Cell inner membrane</location>
        <topology evidence="1">Peripheral membrane protein</topology>
        <orientation evidence="1">Cytoplasmic side</orientation>
    </subcellularLocation>
</comment>
<comment type="similarity">
    <text evidence="1">Belongs to the TRAFAC class translation factor GTPase superfamily. Classic translation factor GTPase family. LepA subfamily.</text>
</comment>
<organism>
    <name type="scientific">Cytophaga hutchinsonii (strain ATCC 33406 / DSM 1761 / CIP 103989 / NBRC 15051 / NCIMB 9469 / D465)</name>
    <dbReference type="NCBI Taxonomy" id="269798"/>
    <lineage>
        <taxon>Bacteria</taxon>
        <taxon>Pseudomonadati</taxon>
        <taxon>Bacteroidota</taxon>
        <taxon>Cytophagia</taxon>
        <taxon>Cytophagales</taxon>
        <taxon>Cytophagaceae</taxon>
        <taxon>Cytophaga</taxon>
    </lineage>
</organism>
<sequence length="596" mass="66808">MENIRNFCIIAHIDHGKSTLADRLLEFTSTVSNRQMQAQVLDDMDLERERGITIKSHAIQMNYIYEGQKYVLNLIDTPGHVDFSYEVSRSIAACEGALLIVDAAQGIEAQTISNLYLALENDLEIIPVLNKIDLPGAMPEEVKDQVVELLGCDRDSIIPASGKEGIGIFEILAAIIQRIPPPKGDPKAPLQALIFDSQFNSFRGIEVMFRIFNGTIKKGDKVKFINIGKEYYADEIGVLKLQQEPQLEMSAGNVGYIISGIKEAKDVKVGDTITHVSRPGEPIQGFADVKPMVFAGIYPVETSEFEDLRAAMEKLQLNDASLVWEPETSIALGFGFRCGFLGMLHMEIVQERLEREFDMTVITTVPSVQFKAYLTKGNEMVVVNAPSDMPEPTTLDYIEEPYIKAQIITKADFVGPVISLCMDKRGIITNQTYLTSDRVELTFELPLAEIVFDFFDKLKTISKGYASLDYELIGFRESNVIKLDIMLNGEKVDALSAIVHRDKAYDWGKRLCEKLKDLIPMQMFEIAVQAAIGQKIIARETVKAMRKNVLAKCYGGDISRKRKLLEKQKKGKKRMRQVGNVEIPQAAFMAILKLDQ</sequence>
<gene>
    <name evidence="1" type="primary">lepA</name>
    <name type="ordered locus">CHU_1717</name>
</gene>